<reference key="1">
    <citation type="journal article" date="1997" name="Nature">
        <title>The nucleotide sequence of Saccharomyces cerevisiae chromosome XIII.</title>
        <authorList>
            <person name="Bowman S."/>
            <person name="Churcher C.M."/>
            <person name="Badcock K."/>
            <person name="Brown D."/>
            <person name="Chillingworth T."/>
            <person name="Connor R."/>
            <person name="Dedman K."/>
            <person name="Devlin K."/>
            <person name="Gentles S."/>
            <person name="Hamlin N."/>
            <person name="Hunt S."/>
            <person name="Jagels K."/>
            <person name="Lye G."/>
            <person name="Moule S."/>
            <person name="Odell C."/>
            <person name="Pearson D."/>
            <person name="Rajandream M.A."/>
            <person name="Rice P."/>
            <person name="Skelton J."/>
            <person name="Walsh S.V."/>
            <person name="Whitehead S."/>
            <person name="Barrell B.G."/>
        </authorList>
    </citation>
    <scope>NUCLEOTIDE SEQUENCE [LARGE SCALE GENOMIC DNA]</scope>
    <source>
        <strain>ATCC 204508 / S288c</strain>
    </source>
</reference>
<reference key="2">
    <citation type="journal article" date="2014" name="G3 (Bethesda)">
        <title>The reference genome sequence of Saccharomyces cerevisiae: Then and now.</title>
        <authorList>
            <person name="Engel S.R."/>
            <person name="Dietrich F.S."/>
            <person name="Fisk D.G."/>
            <person name="Binkley G."/>
            <person name="Balakrishnan R."/>
            <person name="Costanzo M.C."/>
            <person name="Dwight S.S."/>
            <person name="Hitz B.C."/>
            <person name="Karra K."/>
            <person name="Nash R.S."/>
            <person name="Weng S."/>
            <person name="Wong E.D."/>
            <person name="Lloyd P."/>
            <person name="Skrzypek M.S."/>
            <person name="Miyasato S.R."/>
            <person name="Simison M."/>
            <person name="Cherry J.M."/>
        </authorList>
    </citation>
    <scope>GENOME REANNOTATION</scope>
    <source>
        <strain>ATCC 204508 / S288c</strain>
    </source>
</reference>
<reference key="3">
    <citation type="journal article" date="2007" name="Genome Res.">
        <title>Approaching a complete repository of sequence-verified protein-encoding clones for Saccharomyces cerevisiae.</title>
        <authorList>
            <person name="Hu Y."/>
            <person name="Rolfs A."/>
            <person name="Bhullar B."/>
            <person name="Murthy T.V.S."/>
            <person name="Zhu C."/>
            <person name="Berger M.F."/>
            <person name="Camargo A.A."/>
            <person name="Kelley F."/>
            <person name="McCarron S."/>
            <person name="Jepson D."/>
            <person name="Richardson A."/>
            <person name="Raphael J."/>
            <person name="Moreira D."/>
            <person name="Taycher E."/>
            <person name="Zuo D."/>
            <person name="Mohr S."/>
            <person name="Kane M.F."/>
            <person name="Williamson J."/>
            <person name="Simpson A.J.G."/>
            <person name="Bulyk M.L."/>
            <person name="Harlow E."/>
            <person name="Marsischky G."/>
            <person name="Kolodner R.D."/>
            <person name="LaBaer J."/>
        </authorList>
    </citation>
    <scope>NUCLEOTIDE SEQUENCE [GENOMIC DNA]</scope>
    <source>
        <strain>ATCC 204508 / S288c</strain>
    </source>
</reference>
<reference key="4">
    <citation type="journal article" date="1985" name="EMBO J.">
        <title>Molecular cloning and characterization of the yeast RAD10 gene and expression of RAD10 protein in E. coli.</title>
        <authorList>
            <person name="Weiss W.A."/>
            <person name="Friedberg E.C."/>
        </authorList>
    </citation>
    <scope>NUCLEOTIDE SEQUENCE [GENOMIC DNA] OF 2-133</scope>
</reference>
<protein>
    <recommendedName>
        <fullName>Putative uncharacterized protein YML094C-A</fullName>
    </recommendedName>
</protein>
<comment type="miscellaneous">
    <text evidence="1">Partially overlaps GIM5.</text>
</comment>
<comment type="caution">
    <text evidence="2">Product of a dubious gene prediction unlikely to encode a functional protein. Because of that it is not part of the S.cerevisiae S288c complete/reference proteome set.</text>
</comment>
<evidence type="ECO:0000305" key="1"/>
<evidence type="ECO:0000305" key="2">
    <source>
    </source>
</evidence>
<name>YM094_YEAST</name>
<sequence>MSTMNFLLSTILPGMYNDADAGTSSFCPSFPAWETVLISSIHSVNLPLAMVNACKDCVKCCNSWSNCCFTAFSCSGFSLVKSTKFRTCSNLKVSKVSVRWQQRRSYSFTYFFERTWLDFYSALSCLGHSKIFI</sequence>
<organism>
    <name type="scientific">Saccharomyces cerevisiae (strain ATCC 204508 / S288c)</name>
    <name type="common">Baker's yeast</name>
    <dbReference type="NCBI Taxonomy" id="559292"/>
    <lineage>
        <taxon>Eukaryota</taxon>
        <taxon>Fungi</taxon>
        <taxon>Dikarya</taxon>
        <taxon>Ascomycota</taxon>
        <taxon>Saccharomycotina</taxon>
        <taxon>Saccharomycetes</taxon>
        <taxon>Saccharomycetales</taxon>
        <taxon>Saccharomycetaceae</taxon>
        <taxon>Saccharomyces</taxon>
    </lineage>
</organism>
<proteinExistence type="uncertain"/>
<gene>
    <name type="ordered locus">YML094C-A</name>
    <name type="ORF">YML095C-A</name>
</gene>
<accession>Q12744</accession>
<accession>Q7LHY8</accession>
<feature type="chain" id="PRO_0000299663" description="Putative uncharacterized protein YML094C-A">
    <location>
        <begin position="1"/>
        <end position="133"/>
    </location>
</feature>
<dbReference type="EMBL" id="Z46660">
    <property type="protein sequence ID" value="CAA86643.1"/>
    <property type="molecule type" value="Genomic_DNA"/>
</dbReference>
<dbReference type="EMBL" id="AY693289">
    <property type="protein sequence ID" value="AAT93308.1"/>
    <property type="molecule type" value="Genomic_DNA"/>
</dbReference>
<dbReference type="EMBL" id="X02591">
    <property type="protein sequence ID" value="CAA26432.1"/>
    <property type="molecule type" value="Genomic_DNA"/>
</dbReference>
<dbReference type="PIR" id="S49632">
    <property type="entry name" value="S49632"/>
</dbReference>
<dbReference type="DIP" id="DIP-2715N"/>
<dbReference type="IntAct" id="Q12744">
    <property type="interactions" value="1"/>
</dbReference>
<dbReference type="MINT" id="Q12744"/>
<dbReference type="STRING" id="4932.YML094C-A"/>
<dbReference type="PaxDb" id="4932-YML094C-A"/>
<dbReference type="EnsemblFungi" id="YML094C-A_mRNA">
    <property type="protein sequence ID" value="YML094C-A"/>
    <property type="gene ID" value="YML094C-A"/>
</dbReference>
<dbReference type="AGR" id="SGD:S000004561"/>
<dbReference type="SGD" id="S000004561">
    <property type="gene designation" value="YML094C-A"/>
</dbReference>
<dbReference type="HOGENOM" id="CLU_1907875_0_0_1"/>